<reference key="1">
    <citation type="journal article" date="2006" name="Mol. Biol. Evol.">
        <title>The chloroplast genome sequence of Chara vulgaris sheds new light into the closest green algal relatives of land plants.</title>
        <authorList>
            <person name="Turmel M."/>
            <person name="Otis C."/>
            <person name="Lemieux C."/>
        </authorList>
    </citation>
    <scope>NUCLEOTIDE SEQUENCE [LARGE SCALE GENOMIC DNA]</scope>
</reference>
<sequence length="1074" mass="122226">MKFEKNTDIFILPDFIRIQLESFHRFIEKGLLEEFQRFPVIRDSSGELSYFLNGKRYKLQEPSFNEQEAIYQASTYSSELYVPAQITHTKSEKTKSEIILIGNIPIMTARGNFIINGASRVIVNQILRSPGLYYGSELDAQANITYSCTFISEWGGRLKLEMDNKRRIWVRLSKKRKIPVLLLLLAMGLNWKDLEKLISRPSLLLSYLSKEKRTPYSPEEAIIELYRHSCSVSGEISFSENIRKELYHKFFKIRCEIGSIGRLNINKKLNLDIPEEERFLVPQDLIAAINSLIEKSFKIVNLDDIDHLKNRRVHLIADMLQSQVRIALNRLKRMIAEVMRGINKRKNLPNPQSLVTPKPLVATFQEFFGSHPLCQFMDQTNPLAEITHKRRISSLGPGGLTQKTATFNVRDIHPSHYGKICPIETPEGQNAGLVSSLAILANINQNGFIESPFLKLHKNEYKQLTGSEHLCSEQEEYYRITTGEHSRETAEKKGKPTPIRYRQEFSATAFHFLHFRDILPIQYFSIATSLIPFLEHDDANRALMGSNMQRQAVPLLRPEKPIVGTGLEGQVALDSAALVLSKIEGKVDFVDGRNINIRSNIVINEFFSFQLINYERSNQNTCLHQKPIVKKDDYVKKGELLADASSTLGGEISLGNNILVAYMPWEGYNFEDAVLINERLIYEDIYTSIHIEKYEIEVNMTSLGPEKITKKIPHLSEYLLRNLDVNGLILLGSWVKTGDVLVGKLTPREPGESLRLPEGRLLHAIFGIKASSFFETCLKVAPGAEGRVIDVRWVESANKLTQKYIKTVNIYILQKRKIQVGDKIAGRHGNKGVISRILPREDMPYIQDGTPIDMVLSPLGVPSRMNLGQIFECLLGLAGESLKKHYRIMPFDERHEREASRKLAFSELYQAKKFTGHSWLFEPDTPGKSQLFDGRTGQTFENAITVGKAYILKLIHQVDDKIHARSTGPYSMVTQQPLGGKARRGGQRMGEMEVWALEGFGAAYTLQELLTRKSDDMKGRNEALGAIVTGNLIPKPNTTPESFKLLMRELRCLCLNIHHCSLFQENLSMKNIEF</sequence>
<comment type="function">
    <text evidence="1">DNA-dependent RNA polymerase catalyzes the transcription of DNA into RNA using the four ribonucleoside triphosphates as substrates.</text>
</comment>
<comment type="catalytic activity">
    <reaction evidence="1">
        <text>RNA(n) + a ribonucleoside 5'-triphosphate = RNA(n+1) + diphosphate</text>
        <dbReference type="Rhea" id="RHEA:21248"/>
        <dbReference type="Rhea" id="RHEA-COMP:14527"/>
        <dbReference type="Rhea" id="RHEA-COMP:17342"/>
        <dbReference type="ChEBI" id="CHEBI:33019"/>
        <dbReference type="ChEBI" id="CHEBI:61557"/>
        <dbReference type="ChEBI" id="CHEBI:140395"/>
        <dbReference type="EC" id="2.7.7.6"/>
    </reaction>
</comment>
<comment type="subunit">
    <text evidence="1">In plastids the minimal PEP RNA polymerase catalytic core is composed of four subunits: alpha, beta, beta', and beta''. When a (nuclear-encoded) sigma factor is associated with the core the holoenzyme is formed, which can initiate transcription.</text>
</comment>
<comment type="subcellular location">
    <subcellularLocation>
        <location>Plastid</location>
        <location>Chloroplast</location>
    </subcellularLocation>
</comment>
<comment type="similarity">
    <text evidence="1">Belongs to the RNA polymerase beta chain family.</text>
</comment>
<comment type="sequence caution" evidence="2">
    <conflict type="erroneous initiation">
        <sequence resource="EMBL-CDS" id="ABA61980"/>
    </conflict>
</comment>
<accession>Q1ACN6</accession>
<dbReference type="EC" id="2.7.7.6" evidence="1"/>
<dbReference type="EMBL" id="DQ229107">
    <property type="protein sequence ID" value="ABA61980.1"/>
    <property type="status" value="ALT_INIT"/>
    <property type="molecule type" value="Genomic_DNA"/>
</dbReference>
<dbReference type="RefSeq" id="YP_635711.1">
    <property type="nucleotide sequence ID" value="NC_008097.1"/>
</dbReference>
<dbReference type="SMR" id="Q1ACN6"/>
<dbReference type="GeneID" id="4100250"/>
<dbReference type="GO" id="GO:0009507">
    <property type="term" value="C:chloroplast"/>
    <property type="evidence" value="ECO:0007669"/>
    <property type="project" value="UniProtKB-SubCell"/>
</dbReference>
<dbReference type="GO" id="GO:0000428">
    <property type="term" value="C:DNA-directed RNA polymerase complex"/>
    <property type="evidence" value="ECO:0007669"/>
    <property type="project" value="UniProtKB-KW"/>
</dbReference>
<dbReference type="GO" id="GO:0005739">
    <property type="term" value="C:mitochondrion"/>
    <property type="evidence" value="ECO:0007669"/>
    <property type="project" value="GOC"/>
</dbReference>
<dbReference type="GO" id="GO:0003677">
    <property type="term" value="F:DNA binding"/>
    <property type="evidence" value="ECO:0007669"/>
    <property type="project" value="UniProtKB-UniRule"/>
</dbReference>
<dbReference type="GO" id="GO:0003899">
    <property type="term" value="F:DNA-directed RNA polymerase activity"/>
    <property type="evidence" value="ECO:0007669"/>
    <property type="project" value="UniProtKB-UniRule"/>
</dbReference>
<dbReference type="GO" id="GO:0032549">
    <property type="term" value="F:ribonucleoside binding"/>
    <property type="evidence" value="ECO:0007669"/>
    <property type="project" value="InterPro"/>
</dbReference>
<dbReference type="GO" id="GO:0006351">
    <property type="term" value="P:DNA-templated transcription"/>
    <property type="evidence" value="ECO:0007669"/>
    <property type="project" value="UniProtKB-UniRule"/>
</dbReference>
<dbReference type="CDD" id="cd00653">
    <property type="entry name" value="RNA_pol_B_RPB2"/>
    <property type="match status" value="1"/>
</dbReference>
<dbReference type="Gene3D" id="2.40.50.100">
    <property type="match status" value="1"/>
</dbReference>
<dbReference type="Gene3D" id="2.40.50.150">
    <property type="match status" value="1"/>
</dbReference>
<dbReference type="Gene3D" id="3.90.1100.10">
    <property type="match status" value="1"/>
</dbReference>
<dbReference type="Gene3D" id="2.30.150.10">
    <property type="entry name" value="DNA-directed RNA polymerase, beta subunit, external 1 domain"/>
    <property type="match status" value="1"/>
</dbReference>
<dbReference type="Gene3D" id="2.40.270.10">
    <property type="entry name" value="DNA-directed RNA polymerase, subunit 2, domain 6"/>
    <property type="match status" value="1"/>
</dbReference>
<dbReference type="Gene3D" id="3.90.1800.10">
    <property type="entry name" value="RNA polymerase alpha subunit dimerisation domain"/>
    <property type="match status" value="1"/>
</dbReference>
<dbReference type="Gene3D" id="3.90.1110.10">
    <property type="entry name" value="RNA polymerase Rpb2, domain 2"/>
    <property type="match status" value="1"/>
</dbReference>
<dbReference type="HAMAP" id="MF_01321">
    <property type="entry name" value="RNApol_bact_RpoB"/>
    <property type="match status" value="1"/>
</dbReference>
<dbReference type="InterPro" id="IPR042107">
    <property type="entry name" value="DNA-dir_RNA_pol_bsu_ext_1_sf"/>
</dbReference>
<dbReference type="InterPro" id="IPR015712">
    <property type="entry name" value="DNA-dir_RNA_pol_su2"/>
</dbReference>
<dbReference type="InterPro" id="IPR007120">
    <property type="entry name" value="DNA-dir_RNAP_su2_dom"/>
</dbReference>
<dbReference type="InterPro" id="IPR037033">
    <property type="entry name" value="DNA-dir_RNAP_su2_hyb_sf"/>
</dbReference>
<dbReference type="InterPro" id="IPR010243">
    <property type="entry name" value="RNA_pol_bsu_bac"/>
</dbReference>
<dbReference type="InterPro" id="IPR007121">
    <property type="entry name" value="RNA_pol_bsu_CS"/>
</dbReference>
<dbReference type="InterPro" id="IPR007644">
    <property type="entry name" value="RNA_pol_bsu_protrusion"/>
</dbReference>
<dbReference type="InterPro" id="IPR007642">
    <property type="entry name" value="RNA_pol_Rpb2_2"/>
</dbReference>
<dbReference type="InterPro" id="IPR037034">
    <property type="entry name" value="RNA_pol_Rpb2_2_sf"/>
</dbReference>
<dbReference type="InterPro" id="IPR007645">
    <property type="entry name" value="RNA_pol_Rpb2_3"/>
</dbReference>
<dbReference type="InterPro" id="IPR007641">
    <property type="entry name" value="RNA_pol_Rpb2_7"/>
</dbReference>
<dbReference type="InterPro" id="IPR014724">
    <property type="entry name" value="RNA_pol_RPB2_OB-fold"/>
</dbReference>
<dbReference type="NCBIfam" id="NF001616">
    <property type="entry name" value="PRK00405.1"/>
    <property type="match status" value="1"/>
</dbReference>
<dbReference type="PANTHER" id="PTHR20856">
    <property type="entry name" value="DNA-DIRECTED RNA POLYMERASE I SUBUNIT 2"/>
    <property type="match status" value="1"/>
</dbReference>
<dbReference type="Pfam" id="PF04563">
    <property type="entry name" value="RNA_pol_Rpb2_1"/>
    <property type="match status" value="1"/>
</dbReference>
<dbReference type="Pfam" id="PF04561">
    <property type="entry name" value="RNA_pol_Rpb2_2"/>
    <property type="match status" value="1"/>
</dbReference>
<dbReference type="Pfam" id="PF04565">
    <property type="entry name" value="RNA_pol_Rpb2_3"/>
    <property type="match status" value="1"/>
</dbReference>
<dbReference type="Pfam" id="PF00562">
    <property type="entry name" value="RNA_pol_Rpb2_6"/>
    <property type="match status" value="1"/>
</dbReference>
<dbReference type="Pfam" id="PF04560">
    <property type="entry name" value="RNA_pol_Rpb2_7"/>
    <property type="match status" value="1"/>
</dbReference>
<dbReference type="SUPFAM" id="SSF64484">
    <property type="entry name" value="beta and beta-prime subunits of DNA dependent RNA-polymerase"/>
    <property type="match status" value="1"/>
</dbReference>
<dbReference type="PROSITE" id="PS01166">
    <property type="entry name" value="RNA_POL_BETA"/>
    <property type="match status" value="1"/>
</dbReference>
<proteinExistence type="inferred from homology"/>
<evidence type="ECO:0000255" key="1">
    <source>
        <dbReference type="HAMAP-Rule" id="MF_01321"/>
    </source>
</evidence>
<evidence type="ECO:0000305" key="2"/>
<feature type="chain" id="PRO_0000276583" description="DNA-directed RNA polymerase subunit beta">
    <location>
        <begin position="1"/>
        <end position="1074"/>
    </location>
</feature>
<organism>
    <name type="scientific">Chara vulgaris</name>
    <name type="common">Common stonewort</name>
    <dbReference type="NCBI Taxonomy" id="55564"/>
    <lineage>
        <taxon>Eukaryota</taxon>
        <taxon>Viridiplantae</taxon>
        <taxon>Streptophyta</taxon>
        <taxon>Charophyceae</taxon>
        <taxon>Charales</taxon>
        <taxon>Characeae</taxon>
        <taxon>Chara</taxon>
    </lineage>
</organism>
<keyword id="KW-0150">Chloroplast</keyword>
<keyword id="KW-0240">DNA-directed RNA polymerase</keyword>
<keyword id="KW-0548">Nucleotidyltransferase</keyword>
<keyword id="KW-0934">Plastid</keyword>
<keyword id="KW-0804">Transcription</keyword>
<keyword id="KW-0808">Transferase</keyword>
<name>RPOB_CHAVU</name>
<protein>
    <recommendedName>
        <fullName evidence="1">DNA-directed RNA polymerase subunit beta</fullName>
        <ecNumber evidence="1">2.7.7.6</ecNumber>
    </recommendedName>
    <alternativeName>
        <fullName evidence="1">PEP</fullName>
    </alternativeName>
    <alternativeName>
        <fullName evidence="1">Plastid-encoded RNA polymerase subunit beta</fullName>
        <shortName evidence="1">RNA polymerase subunit beta</shortName>
    </alternativeName>
</protein>
<gene>
    <name evidence="1" type="primary">rpoB</name>
</gene>
<geneLocation type="chloroplast"/>